<feature type="chain" id="PRO_0000395163" description="Probable glucan 1,3-beta-glucosidase D">
    <location>
        <begin position="1"/>
        <end position="831"/>
    </location>
</feature>
<feature type="topological domain" description="Cytoplasmic" evidence="2">
    <location>
        <begin position="1"/>
        <end position="297"/>
    </location>
</feature>
<feature type="transmembrane region" description="Helical; Signal-anchor for type II membrane protein" evidence="2">
    <location>
        <begin position="298"/>
        <end position="318"/>
    </location>
</feature>
<feature type="topological domain" description="Extracellular" evidence="2">
    <location>
        <begin position="319"/>
        <end position="831"/>
    </location>
</feature>
<feature type="region of interest" description="Disordered" evidence="3">
    <location>
        <begin position="1"/>
        <end position="179"/>
    </location>
</feature>
<feature type="region of interest" description="Disordered" evidence="3">
    <location>
        <begin position="192"/>
        <end position="241"/>
    </location>
</feature>
<feature type="compositionally biased region" description="Basic and acidic residues" evidence="3">
    <location>
        <begin position="1"/>
        <end position="24"/>
    </location>
</feature>
<feature type="compositionally biased region" description="Basic and acidic residues" evidence="3">
    <location>
        <begin position="44"/>
        <end position="56"/>
    </location>
</feature>
<feature type="compositionally biased region" description="Basic and acidic residues" evidence="3">
    <location>
        <begin position="79"/>
        <end position="93"/>
    </location>
</feature>
<feature type="compositionally biased region" description="Basic and acidic residues" evidence="3">
    <location>
        <begin position="102"/>
        <end position="115"/>
    </location>
</feature>
<feature type="compositionally biased region" description="Basic and acidic residues" evidence="3">
    <location>
        <begin position="137"/>
        <end position="151"/>
    </location>
</feature>
<feature type="compositionally biased region" description="Basic and acidic residues" evidence="3">
    <location>
        <begin position="198"/>
        <end position="213"/>
    </location>
</feature>
<feature type="active site" description="Proton donor" evidence="1">
    <location>
        <position position="597"/>
    </location>
</feature>
<feature type="active site" description="Nucleophile" evidence="1">
    <location>
        <position position="702"/>
    </location>
</feature>
<feature type="glycosylation site" description="N-linked (GlcNAc...) asparagine" evidence="2">
    <location>
        <position position="376"/>
    </location>
</feature>
<feature type="glycosylation site" description="N-linked (GlcNAc...) asparagine" evidence="2">
    <location>
        <position position="381"/>
    </location>
</feature>
<feature type="glycosylation site" description="N-linked (GlcNAc...) asparagine" evidence="2">
    <location>
        <position position="393"/>
    </location>
</feature>
<feature type="glycosylation site" description="N-linked (GlcNAc...) asparagine" evidence="2">
    <location>
        <position position="410"/>
    </location>
</feature>
<feature type="glycosylation site" description="N-linked (GlcNAc...) asparagine" evidence="2">
    <location>
        <position position="442"/>
    </location>
</feature>
<feature type="glycosylation site" description="N-linked (GlcNAc...) asparagine" evidence="2">
    <location>
        <position position="546"/>
    </location>
</feature>
<feature type="glycosylation site" description="N-linked (GlcNAc...) asparagine" evidence="2">
    <location>
        <position position="558"/>
    </location>
</feature>
<feature type="glycosylation site" description="N-linked (GlcNAc...) asparagine" evidence="2">
    <location>
        <position position="610"/>
    </location>
</feature>
<feature type="glycosylation site" description="N-linked (GlcNAc...) asparagine" evidence="2">
    <location>
        <position position="636"/>
    </location>
</feature>
<feature type="glycosylation site" description="N-linked (GlcNAc...) asparagine" evidence="2">
    <location>
        <position position="669"/>
    </location>
</feature>
<feature type="glycosylation site" description="N-linked (GlcNAc...) asparagine" evidence="2">
    <location>
        <position position="689"/>
    </location>
</feature>
<sequence length="831" mass="95079">MPSHSRSRDRYRGERDPSRRYREVYDDDDDDDFDYHPRERRRYRRDDYQHDIRSHESPNYNDDLNEYDAAAEDPAVPLRSHDVEGRRRERSRAGESPIASPSRRDRNRGGEEYRRHGTYGDGGSPTRAMRDRRHRSRDGQRARPRDMDREARRQRRRERARGAAAMKHKSSDSTNSGSHLLSADALAKLRSHYDEEDQRERSQEQEQPRLESKRQRKRPIVGDEPQALAPFPDETPRGQSKGRIVSGAYLEEGHPEMEVRHRGGGGPAMEARWRKEGNWDGTMEGSDAQPPFWKRKKWWIVIGVLVVVLAIVIPVAVVMSKKHGHDDDKSGSSSSVDNSDSPYISSLDGLSHDSIPESAQGSILDPWTWYDTRDFNLTFTNETVGGLPIMGLNSTWDDSTRPNDNVPPLNESFPYGSQPIRGVNLGGWLSIEPFIVPSLFENYSSKDRIIDEYTLCKKLGSSAASTIEKHYADFISEQDFIDMRDAGLDHVRIQFSYWAVTTYDDDPYVAKISWRYLLRAIEYCRKYGLRVNLDPHGIPGSQNGWNHSGREGVIGWLNGTDGQLNRQRSLDFHNQISQFFAQPRYKNVVTIYGLVNEPLMLSLPVEDVLNWTTDATKLVQKNGISAYVTVHDGFLNLSKWKQMLKDRPDRMFLDTHQYTIFNTGQIVLNHTDRVKLICNDWYNMIKEINTTSAGWGPTICGEWSQADTDCAQYLNNVGRGTRWEGTFAIGDSTVYCPTADTGPTCSCASANAPPADYSDGYKKFLQTYAEAQMSAFGTAQGWFYWTWHTESAAQWSYKTAWKNGYMPKKAYAPDFKCGDDIPSFGDLPEYY</sequence>
<comment type="function">
    <text evidence="1">Glucosidase involved in the degradation of cellulosic biomass. Active on lichenan (By similarity).</text>
</comment>
<comment type="catalytic activity">
    <reaction>
        <text>Successive hydrolysis of beta-D-glucose units from the non-reducing ends of (1-&gt;3)-beta-D-glucans, releasing alpha-glucose.</text>
        <dbReference type="EC" id="3.2.1.58"/>
    </reaction>
</comment>
<comment type="subcellular location">
    <subcellularLocation>
        <location evidence="4">Cell membrane</location>
        <topology evidence="4">Single-pass type II membrane protein</topology>
    </subcellularLocation>
</comment>
<comment type="similarity">
    <text evidence="4">Belongs to the glycosyl hydrolase 5 (cellulase A) family.</text>
</comment>
<proteinExistence type="inferred from homology"/>
<dbReference type="EC" id="3.2.1.58"/>
<dbReference type="EMBL" id="EQ963481">
    <property type="protein sequence ID" value="EED48687.1"/>
    <property type="molecule type" value="Genomic_DNA"/>
</dbReference>
<dbReference type="RefSeq" id="XP_002382103.1">
    <property type="nucleotide sequence ID" value="XM_002382062.1"/>
</dbReference>
<dbReference type="SMR" id="B8NNK9"/>
<dbReference type="STRING" id="332952.B8NNK9"/>
<dbReference type="GlyCosmos" id="B8NNK9">
    <property type="glycosylation" value="11 sites, No reported glycans"/>
</dbReference>
<dbReference type="EnsemblFungi" id="EED48687">
    <property type="protein sequence ID" value="EED48687"/>
    <property type="gene ID" value="AFLA_129100"/>
</dbReference>
<dbReference type="VEuPathDB" id="FungiDB:AFLA_012738"/>
<dbReference type="eggNOG" id="ENOG502QRG8">
    <property type="taxonomic scope" value="Eukaryota"/>
</dbReference>
<dbReference type="HOGENOM" id="CLU_004624_4_0_1"/>
<dbReference type="OMA" id="WYWTWKT"/>
<dbReference type="GO" id="GO:0009986">
    <property type="term" value="C:cell surface"/>
    <property type="evidence" value="ECO:0007669"/>
    <property type="project" value="TreeGrafter"/>
</dbReference>
<dbReference type="GO" id="GO:0005576">
    <property type="term" value="C:extracellular region"/>
    <property type="evidence" value="ECO:0007669"/>
    <property type="project" value="TreeGrafter"/>
</dbReference>
<dbReference type="GO" id="GO:0005886">
    <property type="term" value="C:plasma membrane"/>
    <property type="evidence" value="ECO:0007669"/>
    <property type="project" value="UniProtKB-SubCell"/>
</dbReference>
<dbReference type="GO" id="GO:0004338">
    <property type="term" value="F:glucan exo-1,3-beta-glucosidase activity"/>
    <property type="evidence" value="ECO:0007669"/>
    <property type="project" value="UniProtKB-EC"/>
</dbReference>
<dbReference type="GO" id="GO:0071555">
    <property type="term" value="P:cell wall organization"/>
    <property type="evidence" value="ECO:0007669"/>
    <property type="project" value="UniProtKB-KW"/>
</dbReference>
<dbReference type="GO" id="GO:0009251">
    <property type="term" value="P:glucan catabolic process"/>
    <property type="evidence" value="ECO:0007669"/>
    <property type="project" value="TreeGrafter"/>
</dbReference>
<dbReference type="FunFam" id="3.20.20.80:FF:000033">
    <property type="entry name" value="Glucan 1,3-beta-glucosidase A"/>
    <property type="match status" value="1"/>
</dbReference>
<dbReference type="Gene3D" id="3.20.20.80">
    <property type="entry name" value="Glycosidases"/>
    <property type="match status" value="1"/>
</dbReference>
<dbReference type="InterPro" id="IPR001547">
    <property type="entry name" value="Glyco_hydro_5"/>
</dbReference>
<dbReference type="InterPro" id="IPR017853">
    <property type="entry name" value="Glycoside_hydrolase_SF"/>
</dbReference>
<dbReference type="InterPro" id="IPR050386">
    <property type="entry name" value="Glycosyl_hydrolase_5"/>
</dbReference>
<dbReference type="PANTHER" id="PTHR31297:SF34">
    <property type="entry name" value="GLUCAN 1,3-BETA-GLUCOSIDASE 2"/>
    <property type="match status" value="1"/>
</dbReference>
<dbReference type="PANTHER" id="PTHR31297">
    <property type="entry name" value="GLUCAN ENDO-1,6-BETA-GLUCOSIDASE B"/>
    <property type="match status" value="1"/>
</dbReference>
<dbReference type="Pfam" id="PF00150">
    <property type="entry name" value="Cellulase"/>
    <property type="match status" value="1"/>
</dbReference>
<dbReference type="SUPFAM" id="SSF51445">
    <property type="entry name" value="(Trans)glycosidases"/>
    <property type="match status" value="1"/>
</dbReference>
<organism>
    <name type="scientific">Aspergillus flavus (strain ATCC 200026 / FGSC A1120 / IAM 13836 / NRRL 3357 / JCM 12722 / SRRC 167)</name>
    <dbReference type="NCBI Taxonomy" id="332952"/>
    <lineage>
        <taxon>Eukaryota</taxon>
        <taxon>Fungi</taxon>
        <taxon>Dikarya</taxon>
        <taxon>Ascomycota</taxon>
        <taxon>Pezizomycotina</taxon>
        <taxon>Eurotiomycetes</taxon>
        <taxon>Eurotiomycetidae</taxon>
        <taxon>Eurotiales</taxon>
        <taxon>Aspergillaceae</taxon>
        <taxon>Aspergillus</taxon>
        <taxon>Aspergillus subgen. Circumdati</taxon>
    </lineage>
</organism>
<reference key="1">
    <citation type="journal article" date="2015" name="Genome Announc.">
        <title>Genome sequence of Aspergillus flavus NRRL 3357, a strain that causes aflatoxin contamination of food and feed.</title>
        <authorList>
            <person name="Nierman W.C."/>
            <person name="Yu J."/>
            <person name="Fedorova-Abrams N.D."/>
            <person name="Losada L."/>
            <person name="Cleveland T.E."/>
            <person name="Bhatnagar D."/>
            <person name="Bennett J.W."/>
            <person name="Dean R."/>
            <person name="Payne G.A."/>
        </authorList>
    </citation>
    <scope>NUCLEOTIDE SEQUENCE [LARGE SCALE GENOMIC DNA]</scope>
    <source>
        <strain>ATCC 200026 / FGSC A1120 / IAM 13836 / NRRL 3357 / JCM 12722 / SRRC 167</strain>
    </source>
</reference>
<keyword id="KW-0119">Carbohydrate metabolism</keyword>
<keyword id="KW-1003">Cell membrane</keyword>
<keyword id="KW-0961">Cell wall biogenesis/degradation</keyword>
<keyword id="KW-0325">Glycoprotein</keyword>
<keyword id="KW-0326">Glycosidase</keyword>
<keyword id="KW-0378">Hydrolase</keyword>
<keyword id="KW-0472">Membrane</keyword>
<keyword id="KW-0624">Polysaccharide degradation</keyword>
<keyword id="KW-0735">Signal-anchor</keyword>
<keyword id="KW-0812">Transmembrane</keyword>
<keyword id="KW-1133">Transmembrane helix</keyword>
<accession>B8NNK9</accession>
<gene>
    <name type="primary">exgD</name>
    <name type="ORF">AFLA_129100</name>
</gene>
<name>EXGD_ASPFN</name>
<protein>
    <recommendedName>
        <fullName>Probable glucan 1,3-beta-glucosidase D</fullName>
        <ecNumber>3.2.1.58</ecNumber>
    </recommendedName>
    <alternativeName>
        <fullName>Exo-1,3-beta-glucanase D</fullName>
    </alternativeName>
</protein>
<evidence type="ECO:0000250" key="1"/>
<evidence type="ECO:0000255" key="2"/>
<evidence type="ECO:0000256" key="3">
    <source>
        <dbReference type="SAM" id="MobiDB-lite"/>
    </source>
</evidence>
<evidence type="ECO:0000305" key="4"/>